<name>COPA_CANLF</name>
<comment type="function">
    <text>Xenin stimulates exocrine pancreatic secretion. It inhibits pentagastrin-stimulated secretion of acid, to induce exocrine pancreatic secretion and to affect small and large intestinal motility. In the gut, xenin interacts with the neurotensin receptor.</text>
</comment>
<comment type="subunit">
    <text evidence="1 2 3">Oligomeric complex that consists of at least the alpha, beta, beta', gamma, delta, epsilon and zeta subunits. Interacts with SCYL1. Interacts with JAGN1 (By similarity). Interacts with TMEM41B (By similarity). Interacts with SVEP1 (By similarity). Probably interacts with PEX11A.</text>
</comment>
<comment type="tissue specificity">
    <text>Gastric, duodenal and jejunal mucosa. Circulates in the blood. Seems to be confined to specific endocrine cells.</text>
</comment>
<comment type="developmental stage">
    <text>Released into the circulation after a meal.</text>
</comment>
<proteinExistence type="evidence at protein level"/>
<protein>
    <recommendedName>
        <fullName>Coatomer subunit alpha</fullName>
    </recommendedName>
    <alternativeName>
        <fullName>Alpha-coat protein</fullName>
        <shortName>Alpha-COP</shortName>
    </alternativeName>
    <alternativeName>
        <fullName>HEP-COP</fullName>
        <shortName>HEPCOP</shortName>
    </alternativeName>
    <component>
        <recommendedName>
            <fullName>Xenin</fullName>
        </recommendedName>
        <alternativeName>
            <fullName>Xenopsin-related peptide</fullName>
        </alternativeName>
    </component>
    <component>
        <recommendedName>
            <fullName>Proxenin</fullName>
        </recommendedName>
    </component>
</protein>
<reference key="1">
    <citation type="journal article" date="1996" name="Peptides">
        <title>Identification of proxenin as a precursor of the peptide xenin with sequence homology to yeast and mammalian coat protein alpha.</title>
        <authorList>
            <person name="Hamscher G."/>
            <person name="Meyer H.E."/>
            <person name="Feurle G.E."/>
        </authorList>
    </citation>
    <scope>PROTEIN SEQUENCE</scope>
    <source>
        <tissue>Pancreas</tissue>
    </source>
</reference>
<reference key="2">
    <citation type="journal article" date="1990" name="Peptides">
        <title>Isolation and sequence of canine xenopsin and an extended fragment from its precursor.</title>
        <authorList>
            <person name="Carraway R.E."/>
            <person name="Mitra S.P."/>
        </authorList>
    </citation>
    <scope>PROTEIN SEQUENCE OF 1-25</scope>
</reference>
<accession>P40765</accession>
<feature type="chain" id="PRO_0000223306" description="Coatomer subunit alpha">
    <location>
        <begin position="1"/>
        <end position="35" status="greater than"/>
    </location>
</feature>
<feature type="peptide" id="PRO_0000041402" description="Proxenin">
    <location>
        <begin position="1"/>
        <end position="35"/>
    </location>
</feature>
<feature type="peptide" id="PRO_0000041403" description="Xenin">
    <location>
        <begin position="1"/>
        <end position="25"/>
    </location>
</feature>
<feature type="non-terminal residue">
    <location>
        <position position="35"/>
    </location>
</feature>
<dbReference type="PIR" id="A60412">
    <property type="entry name" value="A60412"/>
</dbReference>
<dbReference type="SMR" id="P40765"/>
<dbReference type="FunCoup" id="P40765">
    <property type="interactions" value="3036"/>
</dbReference>
<dbReference type="STRING" id="9615.ENSCAFP00000018474"/>
<dbReference type="InParanoid" id="P40765"/>
<dbReference type="OrthoDB" id="10261470at2759"/>
<dbReference type="Proteomes" id="UP000002254">
    <property type="component" value="Unplaced"/>
</dbReference>
<dbReference type="Proteomes" id="UP000694429">
    <property type="component" value="Unplaced"/>
</dbReference>
<dbReference type="Proteomes" id="UP000694542">
    <property type="component" value="Unplaced"/>
</dbReference>
<dbReference type="Proteomes" id="UP000805418">
    <property type="component" value="Unplaced"/>
</dbReference>
<dbReference type="GO" id="GO:0005179">
    <property type="term" value="F:hormone activity"/>
    <property type="evidence" value="ECO:0007669"/>
    <property type="project" value="UniProtKB-KW"/>
</dbReference>
<dbReference type="Gene3D" id="2.130.10.10">
    <property type="entry name" value="YVTN repeat-like/Quinoprotein amine dehydrogenase"/>
    <property type="match status" value="1"/>
</dbReference>
<dbReference type="InterPro" id="IPR015943">
    <property type="entry name" value="WD40/YVTN_repeat-like_dom_sf"/>
</dbReference>
<keyword id="KW-0903">Direct protein sequencing</keyword>
<keyword id="KW-0372">Hormone</keyword>
<keyword id="KW-1185">Reference proteome</keyword>
<gene>
    <name type="primary">COPA</name>
</gene>
<sequence length="35" mass="4035">MLTKFETKSARVKGLSFHPKRPWILTSLHNGVIQL</sequence>
<organism>
    <name type="scientific">Canis lupus familiaris</name>
    <name type="common">Dog</name>
    <name type="synonym">Canis familiaris</name>
    <dbReference type="NCBI Taxonomy" id="9615"/>
    <lineage>
        <taxon>Eukaryota</taxon>
        <taxon>Metazoa</taxon>
        <taxon>Chordata</taxon>
        <taxon>Craniata</taxon>
        <taxon>Vertebrata</taxon>
        <taxon>Euteleostomi</taxon>
        <taxon>Mammalia</taxon>
        <taxon>Eutheria</taxon>
        <taxon>Laurasiatheria</taxon>
        <taxon>Carnivora</taxon>
        <taxon>Caniformia</taxon>
        <taxon>Canidae</taxon>
        <taxon>Canis</taxon>
    </lineage>
</organism>
<evidence type="ECO:0000250" key="1"/>
<evidence type="ECO:0000250" key="2">
    <source>
        <dbReference type="UniProtKB" id="P53621"/>
    </source>
</evidence>
<evidence type="ECO:0000250" key="3">
    <source>
        <dbReference type="UniProtKB" id="Q8CIE6"/>
    </source>
</evidence>